<gene>
    <name evidence="1" type="primary">folD</name>
    <name type="ordered locus">Sca_0685</name>
</gene>
<reference key="1">
    <citation type="journal article" date="2009" name="Appl. Environ. Microbiol.">
        <title>Genome analysis of the meat starter culture bacterium Staphylococcus carnosus TM300.</title>
        <authorList>
            <person name="Rosenstein R."/>
            <person name="Nerz C."/>
            <person name="Biswas L."/>
            <person name="Resch A."/>
            <person name="Raddatz G."/>
            <person name="Schuster S.C."/>
            <person name="Goetz F."/>
        </authorList>
    </citation>
    <scope>NUCLEOTIDE SEQUENCE [LARGE SCALE GENOMIC DNA]</scope>
    <source>
        <strain>TM300</strain>
    </source>
</reference>
<protein>
    <recommendedName>
        <fullName evidence="1">Bifunctional protein FolD</fullName>
    </recommendedName>
    <domain>
        <recommendedName>
            <fullName evidence="1">Methylenetetrahydrofolate dehydrogenase</fullName>
            <ecNumber evidence="1">1.5.1.5</ecNumber>
        </recommendedName>
    </domain>
    <domain>
        <recommendedName>
            <fullName evidence="1">Methenyltetrahydrofolate cyclohydrolase</fullName>
            <ecNumber evidence="1">3.5.4.9</ecNumber>
        </recommendedName>
    </domain>
</protein>
<organism>
    <name type="scientific">Staphylococcus carnosus (strain TM300)</name>
    <dbReference type="NCBI Taxonomy" id="396513"/>
    <lineage>
        <taxon>Bacteria</taxon>
        <taxon>Bacillati</taxon>
        <taxon>Bacillota</taxon>
        <taxon>Bacilli</taxon>
        <taxon>Bacillales</taxon>
        <taxon>Staphylococcaceae</taxon>
        <taxon>Staphylococcus</taxon>
    </lineage>
</organism>
<comment type="function">
    <text evidence="1">Catalyzes the oxidation of 5,10-methylenetetrahydrofolate to 5,10-methenyltetrahydrofolate and then the hydrolysis of 5,10-methenyltetrahydrofolate to 10-formyltetrahydrofolate.</text>
</comment>
<comment type="catalytic activity">
    <reaction evidence="1">
        <text>(6R)-5,10-methylene-5,6,7,8-tetrahydrofolate + NADP(+) = (6R)-5,10-methenyltetrahydrofolate + NADPH</text>
        <dbReference type="Rhea" id="RHEA:22812"/>
        <dbReference type="ChEBI" id="CHEBI:15636"/>
        <dbReference type="ChEBI" id="CHEBI:57455"/>
        <dbReference type="ChEBI" id="CHEBI:57783"/>
        <dbReference type="ChEBI" id="CHEBI:58349"/>
        <dbReference type="EC" id="1.5.1.5"/>
    </reaction>
</comment>
<comment type="catalytic activity">
    <reaction evidence="1">
        <text>(6R)-5,10-methenyltetrahydrofolate + H2O = (6R)-10-formyltetrahydrofolate + H(+)</text>
        <dbReference type="Rhea" id="RHEA:23700"/>
        <dbReference type="ChEBI" id="CHEBI:15377"/>
        <dbReference type="ChEBI" id="CHEBI:15378"/>
        <dbReference type="ChEBI" id="CHEBI:57455"/>
        <dbReference type="ChEBI" id="CHEBI:195366"/>
        <dbReference type="EC" id="3.5.4.9"/>
    </reaction>
</comment>
<comment type="pathway">
    <text evidence="1">One-carbon metabolism; tetrahydrofolate interconversion.</text>
</comment>
<comment type="subunit">
    <text evidence="1">Homodimer.</text>
</comment>
<comment type="similarity">
    <text evidence="1">Belongs to the tetrahydrofolate dehydrogenase/cyclohydrolase family.</text>
</comment>
<sequence length="285" mass="30839">MVAKILDGKQIAKDYRQGLQDQVEALKEKGYTPKLSVILVGNNGASLSYVKSKKKAAEKIGMISEIVHLEETATEEEVLNELERLNNDDSVSGILVQVPLPSQVSEQKVLEAINPEKDVDGFHPQNIGKLYIDEQTFVPCTPLGIMELLKNADIDLDGKDAVVIGRSHIVGQPVSKLLIQQNATVTILHSHSKDMSKYLKEADVIVSAVGKPGLVTKEDVKEGAVVIDVGNTPDENGKLKGDVEYEDVKEVAGAITPVPGGVGPMTITMVLNNTLLAEKMRRGLE</sequence>
<keyword id="KW-0028">Amino-acid biosynthesis</keyword>
<keyword id="KW-0368">Histidine biosynthesis</keyword>
<keyword id="KW-0378">Hydrolase</keyword>
<keyword id="KW-0486">Methionine biosynthesis</keyword>
<keyword id="KW-0511">Multifunctional enzyme</keyword>
<keyword id="KW-0521">NADP</keyword>
<keyword id="KW-0554">One-carbon metabolism</keyword>
<keyword id="KW-0560">Oxidoreductase</keyword>
<keyword id="KW-0658">Purine biosynthesis</keyword>
<keyword id="KW-1185">Reference proteome</keyword>
<proteinExistence type="inferred from homology"/>
<dbReference type="EC" id="1.5.1.5" evidence="1"/>
<dbReference type="EC" id="3.5.4.9" evidence="1"/>
<dbReference type="EMBL" id="AM295250">
    <property type="protein sequence ID" value="CAL27596.1"/>
    <property type="molecule type" value="Genomic_DNA"/>
</dbReference>
<dbReference type="RefSeq" id="WP_015899939.1">
    <property type="nucleotide sequence ID" value="NC_012121.1"/>
</dbReference>
<dbReference type="SMR" id="B9DQ45"/>
<dbReference type="GeneID" id="93795623"/>
<dbReference type="KEGG" id="sca:SCA_0685"/>
<dbReference type="eggNOG" id="COG0190">
    <property type="taxonomic scope" value="Bacteria"/>
</dbReference>
<dbReference type="HOGENOM" id="CLU_034045_2_1_9"/>
<dbReference type="OrthoDB" id="9803580at2"/>
<dbReference type="BioCyc" id="SCAR396513:SCA_RS03480-MONOMER"/>
<dbReference type="UniPathway" id="UPA00193"/>
<dbReference type="Proteomes" id="UP000000444">
    <property type="component" value="Chromosome"/>
</dbReference>
<dbReference type="GO" id="GO:0005829">
    <property type="term" value="C:cytosol"/>
    <property type="evidence" value="ECO:0007669"/>
    <property type="project" value="TreeGrafter"/>
</dbReference>
<dbReference type="GO" id="GO:0004477">
    <property type="term" value="F:methenyltetrahydrofolate cyclohydrolase activity"/>
    <property type="evidence" value="ECO:0007669"/>
    <property type="project" value="UniProtKB-UniRule"/>
</dbReference>
<dbReference type="GO" id="GO:0004488">
    <property type="term" value="F:methylenetetrahydrofolate dehydrogenase (NADP+) activity"/>
    <property type="evidence" value="ECO:0007669"/>
    <property type="project" value="UniProtKB-UniRule"/>
</dbReference>
<dbReference type="GO" id="GO:0000105">
    <property type="term" value="P:L-histidine biosynthetic process"/>
    <property type="evidence" value="ECO:0007669"/>
    <property type="project" value="UniProtKB-KW"/>
</dbReference>
<dbReference type="GO" id="GO:0009086">
    <property type="term" value="P:methionine biosynthetic process"/>
    <property type="evidence" value="ECO:0007669"/>
    <property type="project" value="UniProtKB-KW"/>
</dbReference>
<dbReference type="GO" id="GO:0006164">
    <property type="term" value="P:purine nucleotide biosynthetic process"/>
    <property type="evidence" value="ECO:0007669"/>
    <property type="project" value="UniProtKB-KW"/>
</dbReference>
<dbReference type="GO" id="GO:0035999">
    <property type="term" value="P:tetrahydrofolate interconversion"/>
    <property type="evidence" value="ECO:0007669"/>
    <property type="project" value="UniProtKB-UniRule"/>
</dbReference>
<dbReference type="CDD" id="cd01080">
    <property type="entry name" value="NAD_bind_m-THF_DH_Cyclohyd"/>
    <property type="match status" value="1"/>
</dbReference>
<dbReference type="FunFam" id="3.40.50.10860:FF:000001">
    <property type="entry name" value="Bifunctional protein FolD"/>
    <property type="match status" value="1"/>
</dbReference>
<dbReference type="FunFam" id="3.40.50.720:FF:000094">
    <property type="entry name" value="Bifunctional protein FolD"/>
    <property type="match status" value="1"/>
</dbReference>
<dbReference type="Gene3D" id="3.40.50.10860">
    <property type="entry name" value="Leucine Dehydrogenase, chain A, domain 1"/>
    <property type="match status" value="1"/>
</dbReference>
<dbReference type="Gene3D" id="3.40.50.720">
    <property type="entry name" value="NAD(P)-binding Rossmann-like Domain"/>
    <property type="match status" value="1"/>
</dbReference>
<dbReference type="HAMAP" id="MF_01576">
    <property type="entry name" value="THF_DHG_CYH"/>
    <property type="match status" value="1"/>
</dbReference>
<dbReference type="InterPro" id="IPR046346">
    <property type="entry name" value="Aminoacid_DH-like_N_sf"/>
</dbReference>
<dbReference type="InterPro" id="IPR036291">
    <property type="entry name" value="NAD(P)-bd_dom_sf"/>
</dbReference>
<dbReference type="InterPro" id="IPR000672">
    <property type="entry name" value="THF_DH/CycHdrlase"/>
</dbReference>
<dbReference type="InterPro" id="IPR020630">
    <property type="entry name" value="THF_DH/CycHdrlase_cat_dom"/>
</dbReference>
<dbReference type="InterPro" id="IPR020867">
    <property type="entry name" value="THF_DH/CycHdrlase_CS"/>
</dbReference>
<dbReference type="InterPro" id="IPR020631">
    <property type="entry name" value="THF_DH/CycHdrlase_NAD-bd_dom"/>
</dbReference>
<dbReference type="NCBIfam" id="NF010772">
    <property type="entry name" value="PRK14175.1"/>
    <property type="match status" value="1"/>
</dbReference>
<dbReference type="PANTHER" id="PTHR48099:SF5">
    <property type="entry name" value="C-1-TETRAHYDROFOLATE SYNTHASE, CYTOPLASMIC"/>
    <property type="match status" value="1"/>
</dbReference>
<dbReference type="PANTHER" id="PTHR48099">
    <property type="entry name" value="C-1-TETRAHYDROFOLATE SYNTHASE, CYTOPLASMIC-RELATED"/>
    <property type="match status" value="1"/>
</dbReference>
<dbReference type="Pfam" id="PF00763">
    <property type="entry name" value="THF_DHG_CYH"/>
    <property type="match status" value="1"/>
</dbReference>
<dbReference type="Pfam" id="PF02882">
    <property type="entry name" value="THF_DHG_CYH_C"/>
    <property type="match status" value="1"/>
</dbReference>
<dbReference type="PRINTS" id="PR00085">
    <property type="entry name" value="THFDHDRGNASE"/>
</dbReference>
<dbReference type="SUPFAM" id="SSF53223">
    <property type="entry name" value="Aminoacid dehydrogenase-like, N-terminal domain"/>
    <property type="match status" value="1"/>
</dbReference>
<dbReference type="SUPFAM" id="SSF51735">
    <property type="entry name" value="NAD(P)-binding Rossmann-fold domains"/>
    <property type="match status" value="1"/>
</dbReference>
<dbReference type="PROSITE" id="PS00767">
    <property type="entry name" value="THF_DHG_CYH_2"/>
    <property type="match status" value="1"/>
</dbReference>
<name>FOLD_STACT</name>
<accession>B9DQ45</accession>
<evidence type="ECO:0000255" key="1">
    <source>
        <dbReference type="HAMAP-Rule" id="MF_01576"/>
    </source>
</evidence>
<feature type="chain" id="PRO_1000185628" description="Bifunctional protein FolD">
    <location>
        <begin position="1"/>
        <end position="285"/>
    </location>
</feature>
<feature type="binding site" evidence="1">
    <location>
        <begin position="165"/>
        <end position="167"/>
    </location>
    <ligand>
        <name>NADP(+)</name>
        <dbReference type="ChEBI" id="CHEBI:58349"/>
    </ligand>
</feature>
<feature type="binding site" evidence="1">
    <location>
        <position position="190"/>
    </location>
    <ligand>
        <name>NADP(+)</name>
        <dbReference type="ChEBI" id="CHEBI:58349"/>
    </ligand>
</feature>